<evidence type="ECO:0000250" key="1"/>
<evidence type="ECO:0000305" key="2"/>
<proteinExistence type="inferred from homology"/>
<organism>
    <name type="scientific">Staphylococcus aureus (strain USA300)</name>
    <dbReference type="NCBI Taxonomy" id="367830"/>
    <lineage>
        <taxon>Bacteria</taxon>
        <taxon>Bacillati</taxon>
        <taxon>Bacillota</taxon>
        <taxon>Bacilli</taxon>
        <taxon>Bacillales</taxon>
        <taxon>Staphylococcaceae</taxon>
        <taxon>Staphylococcus</taxon>
    </lineage>
</organism>
<gene>
    <name type="primary">ctsR</name>
    <name type="ordered locus">SAUSA300_0507</name>
</gene>
<protein>
    <recommendedName>
        <fullName>Transcriptional regulator CtsR</fullName>
    </recommendedName>
</protein>
<comment type="function">
    <text evidence="1">Negative regulator of clpC, clpB and clpP transcription by binding directly and specifically to their promoter region.</text>
</comment>
<comment type="similarity">
    <text evidence="2">Belongs to the CtsR family.</text>
</comment>
<feature type="chain" id="PRO_0000274129" description="Transcriptional regulator CtsR">
    <location>
        <begin position="1"/>
        <end position="153"/>
    </location>
</feature>
<reference key="1">
    <citation type="journal article" date="2006" name="Lancet">
        <title>Complete genome sequence of USA300, an epidemic clone of community-acquired meticillin-resistant Staphylococcus aureus.</title>
        <authorList>
            <person name="Diep B.A."/>
            <person name="Gill S.R."/>
            <person name="Chang R.F."/>
            <person name="Phan T.H."/>
            <person name="Chen J.H."/>
            <person name="Davidson M.G."/>
            <person name="Lin F."/>
            <person name="Lin J."/>
            <person name="Carleton H.A."/>
            <person name="Mongodin E.F."/>
            <person name="Sensabaugh G.F."/>
            <person name="Perdreau-Remington F."/>
        </authorList>
    </citation>
    <scope>NUCLEOTIDE SEQUENCE [LARGE SCALE GENOMIC DNA]</scope>
    <source>
        <strain>USA300</strain>
    </source>
</reference>
<name>CTSR_STAA3</name>
<accession>Q2FJB8</accession>
<keyword id="KW-0238">DNA-binding</keyword>
<keyword id="KW-0678">Repressor</keyword>
<keyword id="KW-0346">Stress response</keyword>
<keyword id="KW-0804">Transcription</keyword>
<keyword id="KW-0805">Transcription regulation</keyword>
<sequence>MHNMSDIIEQYIKRLFEESNEDVVEIQRANIAQRFDCVPSQLNYVIKTRFTNEHGYEIESKRGGGGYIRITKIENKDATGYINHLLQLIGPSISQQQAYYIIDGLLDKMLINEREAKMIQAVIDRETLSMDMVSRDIIRANILKRLLPVINYY</sequence>
<dbReference type="EMBL" id="CP000255">
    <property type="protein sequence ID" value="ABD22257.1"/>
    <property type="molecule type" value="Genomic_DNA"/>
</dbReference>
<dbReference type="RefSeq" id="WP_000551762.1">
    <property type="nucleotide sequence ID" value="NZ_CP027476.1"/>
</dbReference>
<dbReference type="SMR" id="Q2FJB8"/>
<dbReference type="KEGG" id="saa:SAUSA300_0507"/>
<dbReference type="HOGENOM" id="CLU_118139_0_0_9"/>
<dbReference type="OMA" id="ANVFNCA"/>
<dbReference type="Proteomes" id="UP000001939">
    <property type="component" value="Chromosome"/>
</dbReference>
<dbReference type="GO" id="GO:0003677">
    <property type="term" value="F:DNA binding"/>
    <property type="evidence" value="ECO:0007669"/>
    <property type="project" value="UniProtKB-KW"/>
</dbReference>
<dbReference type="GO" id="GO:0006355">
    <property type="term" value="P:regulation of DNA-templated transcription"/>
    <property type="evidence" value="ECO:0007669"/>
    <property type="project" value="InterPro"/>
</dbReference>
<dbReference type="FunFam" id="1.10.1200.150:FF:000002">
    <property type="entry name" value="Transcriptional regulator CtsR"/>
    <property type="match status" value="1"/>
</dbReference>
<dbReference type="FunFam" id="3.30.56.130:FF:000001">
    <property type="entry name" value="Transcriptional regulator CtsR"/>
    <property type="match status" value="1"/>
</dbReference>
<dbReference type="Gene3D" id="1.10.1200.150">
    <property type="entry name" value="Transcriptional regulator CtsR, C-terminal domain"/>
    <property type="match status" value="1"/>
</dbReference>
<dbReference type="Gene3D" id="3.30.56.130">
    <property type="entry name" value="Transcriptional regulator CtsR, winged HTH domain"/>
    <property type="match status" value="1"/>
</dbReference>
<dbReference type="InterPro" id="IPR008463">
    <property type="entry name" value="CtsR"/>
</dbReference>
<dbReference type="InterPro" id="IPR041473">
    <property type="entry name" value="CtsR_C"/>
</dbReference>
<dbReference type="InterPro" id="IPR041908">
    <property type="entry name" value="CtsR_C_sf"/>
</dbReference>
<dbReference type="InterPro" id="IPR040465">
    <property type="entry name" value="CtsR_N"/>
</dbReference>
<dbReference type="InterPro" id="IPR041902">
    <property type="entry name" value="CtsR_N_sf"/>
</dbReference>
<dbReference type="Pfam" id="PF05848">
    <property type="entry name" value="CtsR"/>
    <property type="match status" value="1"/>
</dbReference>
<dbReference type="Pfam" id="PF17727">
    <property type="entry name" value="CtsR_C"/>
    <property type="match status" value="1"/>
</dbReference>
<dbReference type="PIRSF" id="PIRSF010607">
    <property type="entry name" value="Txn_repr_CtsR"/>
    <property type="match status" value="1"/>
</dbReference>